<sequence length="174" mass="18895">MKDLTMLLDELKDMSFFNKGDICLIGCSTSEVIGEKIGTVGSMEVAETIFNALDVVSKETGVTFAFQGCEHINRAITIEKSQYNPLTMEEVSVVPDVHAGGSLATYAFQHMKDPIVVEHITVPCGIDIGQTLIGMHIKHVCVPVRTSVKQVGQAIVTIATSRPKKIGGERAKYQ</sequence>
<protein>
    <recommendedName>
        <fullName evidence="1">UPF0340 protein USA300HOU_2104</fullName>
    </recommendedName>
</protein>
<gene>
    <name type="ordered locus">USA300HOU_2104</name>
</gene>
<reference key="1">
    <citation type="journal article" date="2007" name="BMC Microbiol.">
        <title>Subtle genetic changes enhance virulence of methicillin resistant and sensitive Staphylococcus aureus.</title>
        <authorList>
            <person name="Highlander S.K."/>
            <person name="Hulten K.G."/>
            <person name="Qin X."/>
            <person name="Jiang H."/>
            <person name="Yerrapragada S."/>
            <person name="Mason E.O. Jr."/>
            <person name="Shang Y."/>
            <person name="Williams T.M."/>
            <person name="Fortunov R.M."/>
            <person name="Liu Y."/>
            <person name="Igboeli O."/>
            <person name="Petrosino J."/>
            <person name="Tirumalai M."/>
            <person name="Uzman A."/>
            <person name="Fox G.E."/>
            <person name="Cardenas A.M."/>
            <person name="Muzny D.M."/>
            <person name="Hemphill L."/>
            <person name="Ding Y."/>
            <person name="Dugan S."/>
            <person name="Blyth P.R."/>
            <person name="Buhay C.J."/>
            <person name="Dinh H.H."/>
            <person name="Hawes A.C."/>
            <person name="Holder M."/>
            <person name="Kovar C.L."/>
            <person name="Lee S.L."/>
            <person name="Liu W."/>
            <person name="Nazareth L.V."/>
            <person name="Wang Q."/>
            <person name="Zhou J."/>
            <person name="Kaplan S.L."/>
            <person name="Weinstock G.M."/>
        </authorList>
    </citation>
    <scope>NUCLEOTIDE SEQUENCE [LARGE SCALE GENOMIC DNA]</scope>
    <source>
        <strain>USA300 / TCH1516</strain>
    </source>
</reference>
<evidence type="ECO:0000255" key="1">
    <source>
        <dbReference type="HAMAP-Rule" id="MF_00800"/>
    </source>
</evidence>
<dbReference type="EMBL" id="CP000730">
    <property type="protein sequence ID" value="ABX30101.1"/>
    <property type="molecule type" value="Genomic_DNA"/>
</dbReference>
<dbReference type="RefSeq" id="WP_000654185.1">
    <property type="nucleotide sequence ID" value="NC_010079.1"/>
</dbReference>
<dbReference type="SMR" id="A8YY81"/>
<dbReference type="KEGG" id="sax:USA300HOU_2104"/>
<dbReference type="HOGENOM" id="CLU_106658_0_0_9"/>
<dbReference type="BioCyc" id="SAUR451516-HMP:GTV5-2177-MONOMER"/>
<dbReference type="Gene3D" id="3.40.50.10360">
    <property type="entry name" value="Hypothetical protein TT1679"/>
    <property type="match status" value="1"/>
</dbReference>
<dbReference type="HAMAP" id="MF_00800">
    <property type="entry name" value="UPF0340"/>
    <property type="match status" value="1"/>
</dbReference>
<dbReference type="InterPro" id="IPR028345">
    <property type="entry name" value="Antibiotic_NAT-like"/>
</dbReference>
<dbReference type="InterPro" id="IPR006340">
    <property type="entry name" value="DUF436"/>
</dbReference>
<dbReference type="NCBIfam" id="TIGR01440">
    <property type="entry name" value="TIGR01440 family protein"/>
    <property type="match status" value="1"/>
</dbReference>
<dbReference type="Pfam" id="PF04260">
    <property type="entry name" value="DUF436"/>
    <property type="match status" value="1"/>
</dbReference>
<dbReference type="PIRSF" id="PIRSF007510">
    <property type="entry name" value="UCP007510"/>
    <property type="match status" value="1"/>
</dbReference>
<dbReference type="SUPFAM" id="SSF110710">
    <property type="entry name" value="TTHA0583/YokD-like"/>
    <property type="match status" value="1"/>
</dbReference>
<name>Y2104_STAAT</name>
<accession>A8YY81</accession>
<organism>
    <name type="scientific">Staphylococcus aureus (strain USA300 / TCH1516)</name>
    <dbReference type="NCBI Taxonomy" id="451516"/>
    <lineage>
        <taxon>Bacteria</taxon>
        <taxon>Bacillati</taxon>
        <taxon>Bacillota</taxon>
        <taxon>Bacilli</taxon>
        <taxon>Bacillales</taxon>
        <taxon>Staphylococcaceae</taxon>
        <taxon>Staphylococcus</taxon>
    </lineage>
</organism>
<proteinExistence type="inferred from homology"/>
<comment type="similarity">
    <text evidence="1">Belongs to the UPF0340 family.</text>
</comment>
<feature type="chain" id="PRO_1000083692" description="UPF0340 protein USA300HOU_2104">
    <location>
        <begin position="1"/>
        <end position="174"/>
    </location>
</feature>